<accession>Q839J1</accession>
<feature type="chain" id="PRO_0000057232" description="Deoxyribose-phosphate aldolase">
    <location>
        <begin position="1"/>
        <end position="220"/>
    </location>
</feature>
<feature type="active site" description="Proton donor/acceptor" evidence="1">
    <location>
        <position position="89"/>
    </location>
</feature>
<feature type="active site" description="Schiff-base intermediate with acetaldehyde" evidence="1">
    <location>
        <position position="152"/>
    </location>
</feature>
<feature type="active site" description="Proton donor/acceptor" evidence="1">
    <location>
        <position position="181"/>
    </location>
</feature>
<reference key="1">
    <citation type="journal article" date="2003" name="Science">
        <title>Role of mobile DNA in the evolution of vancomycin-resistant Enterococcus faecalis.</title>
        <authorList>
            <person name="Paulsen I.T."/>
            <person name="Banerjei L."/>
            <person name="Myers G.S.A."/>
            <person name="Nelson K.E."/>
            <person name="Seshadri R."/>
            <person name="Read T.D."/>
            <person name="Fouts D.E."/>
            <person name="Eisen J.A."/>
            <person name="Gill S.R."/>
            <person name="Heidelberg J.F."/>
            <person name="Tettelin H."/>
            <person name="Dodson R.J."/>
            <person name="Umayam L.A."/>
            <person name="Brinkac L.M."/>
            <person name="Beanan M.J."/>
            <person name="Daugherty S.C."/>
            <person name="DeBoy R.T."/>
            <person name="Durkin S.A."/>
            <person name="Kolonay J.F."/>
            <person name="Madupu R."/>
            <person name="Nelson W.C."/>
            <person name="Vamathevan J.J."/>
            <person name="Tran B."/>
            <person name="Upton J."/>
            <person name="Hansen T."/>
            <person name="Shetty J."/>
            <person name="Khouri H.M."/>
            <person name="Utterback T.R."/>
            <person name="Radune D."/>
            <person name="Ketchum K.A."/>
            <person name="Dougherty B.A."/>
            <person name="Fraser C.M."/>
        </authorList>
    </citation>
    <scope>NUCLEOTIDE SEQUENCE [LARGE SCALE GENOMIC DNA]</scope>
    <source>
        <strain>ATCC 700802 / V583</strain>
    </source>
</reference>
<comment type="function">
    <text evidence="1">Catalyzes a reversible aldol reaction between acetaldehyde and D-glyceraldehyde 3-phosphate to generate 2-deoxy-D-ribose 5-phosphate.</text>
</comment>
<comment type="catalytic activity">
    <reaction evidence="1">
        <text>2-deoxy-D-ribose 5-phosphate = D-glyceraldehyde 3-phosphate + acetaldehyde</text>
        <dbReference type="Rhea" id="RHEA:12821"/>
        <dbReference type="ChEBI" id="CHEBI:15343"/>
        <dbReference type="ChEBI" id="CHEBI:59776"/>
        <dbReference type="ChEBI" id="CHEBI:62877"/>
        <dbReference type="EC" id="4.1.2.4"/>
    </reaction>
</comment>
<comment type="pathway">
    <text evidence="1">Carbohydrate degradation; 2-deoxy-D-ribose 1-phosphate degradation; D-glyceraldehyde 3-phosphate and acetaldehyde from 2-deoxy-alpha-D-ribose 1-phosphate: step 2/2.</text>
</comment>
<comment type="subcellular location">
    <subcellularLocation>
        <location evidence="1">Cytoplasm</location>
    </subcellularLocation>
</comment>
<comment type="similarity">
    <text evidence="1">Belongs to the DeoC/FbaB aldolase family. DeoC type 1 subfamily.</text>
</comment>
<name>DEOC_ENTFA</name>
<sequence>MELNRMIDHTILKPEATEAAVQKIIDEAKEYNFFSVCINPCWVAFASEQLADTDVAVCTVIGFPLGANTPEVKAYEAADAIKNGANEVDMVINIGALKSQQYDYVRQDIQGVVDAAKGKALVKVIIETALLTDEEKVKACELAKEAGADFVKTSTGFSTGGAKVADIRLMRETVGPDMGVKASGGVHNAEEALAMIEAGATRIGASTGVAIVSGATGEGY</sequence>
<evidence type="ECO:0000255" key="1">
    <source>
        <dbReference type="HAMAP-Rule" id="MF_00114"/>
    </source>
</evidence>
<proteinExistence type="inferred from homology"/>
<dbReference type="EC" id="4.1.2.4" evidence="1"/>
<dbReference type="EMBL" id="AE016830">
    <property type="protein sequence ID" value="AAO80048.1"/>
    <property type="molecule type" value="Genomic_DNA"/>
</dbReference>
<dbReference type="RefSeq" id="NP_813976.1">
    <property type="nucleotide sequence ID" value="NC_004668.1"/>
</dbReference>
<dbReference type="RefSeq" id="WP_002356166.1">
    <property type="nucleotide sequence ID" value="NZ_KE136524.1"/>
</dbReference>
<dbReference type="SMR" id="Q839J1"/>
<dbReference type="STRING" id="226185.EF_0174"/>
<dbReference type="EnsemblBacteria" id="AAO80048">
    <property type="protein sequence ID" value="AAO80048"/>
    <property type="gene ID" value="EF_0174"/>
</dbReference>
<dbReference type="KEGG" id="efa:EF0174"/>
<dbReference type="PATRIC" id="fig|226185.45.peg.87"/>
<dbReference type="eggNOG" id="COG0274">
    <property type="taxonomic scope" value="Bacteria"/>
</dbReference>
<dbReference type="HOGENOM" id="CLU_053595_0_2_9"/>
<dbReference type="UniPathway" id="UPA00002">
    <property type="reaction ID" value="UER00468"/>
</dbReference>
<dbReference type="Proteomes" id="UP000001415">
    <property type="component" value="Chromosome"/>
</dbReference>
<dbReference type="GO" id="GO:0005737">
    <property type="term" value="C:cytoplasm"/>
    <property type="evidence" value="ECO:0007669"/>
    <property type="project" value="UniProtKB-SubCell"/>
</dbReference>
<dbReference type="GO" id="GO:0004139">
    <property type="term" value="F:deoxyribose-phosphate aldolase activity"/>
    <property type="evidence" value="ECO:0007669"/>
    <property type="project" value="UniProtKB-UniRule"/>
</dbReference>
<dbReference type="GO" id="GO:0006018">
    <property type="term" value="P:2-deoxyribose 1-phosphate catabolic process"/>
    <property type="evidence" value="ECO:0007669"/>
    <property type="project" value="UniProtKB-UniRule"/>
</dbReference>
<dbReference type="GO" id="GO:0016052">
    <property type="term" value="P:carbohydrate catabolic process"/>
    <property type="evidence" value="ECO:0007669"/>
    <property type="project" value="TreeGrafter"/>
</dbReference>
<dbReference type="GO" id="GO:0009264">
    <property type="term" value="P:deoxyribonucleotide catabolic process"/>
    <property type="evidence" value="ECO:0007669"/>
    <property type="project" value="InterPro"/>
</dbReference>
<dbReference type="CDD" id="cd00959">
    <property type="entry name" value="DeoC"/>
    <property type="match status" value="1"/>
</dbReference>
<dbReference type="FunFam" id="3.20.20.70:FF:000044">
    <property type="entry name" value="Deoxyribose-phosphate aldolase"/>
    <property type="match status" value="1"/>
</dbReference>
<dbReference type="Gene3D" id="3.20.20.70">
    <property type="entry name" value="Aldolase class I"/>
    <property type="match status" value="1"/>
</dbReference>
<dbReference type="HAMAP" id="MF_00114">
    <property type="entry name" value="DeoC_type1"/>
    <property type="match status" value="1"/>
</dbReference>
<dbReference type="InterPro" id="IPR013785">
    <property type="entry name" value="Aldolase_TIM"/>
</dbReference>
<dbReference type="InterPro" id="IPR011343">
    <property type="entry name" value="DeoC"/>
</dbReference>
<dbReference type="InterPro" id="IPR002915">
    <property type="entry name" value="DeoC/FbaB/LacD_aldolase"/>
</dbReference>
<dbReference type="InterPro" id="IPR028581">
    <property type="entry name" value="DeoC_typeI"/>
</dbReference>
<dbReference type="NCBIfam" id="TIGR00126">
    <property type="entry name" value="deoC"/>
    <property type="match status" value="1"/>
</dbReference>
<dbReference type="PANTHER" id="PTHR10889">
    <property type="entry name" value="DEOXYRIBOSE-PHOSPHATE ALDOLASE"/>
    <property type="match status" value="1"/>
</dbReference>
<dbReference type="PANTHER" id="PTHR10889:SF1">
    <property type="entry name" value="DEOXYRIBOSE-PHOSPHATE ALDOLASE"/>
    <property type="match status" value="1"/>
</dbReference>
<dbReference type="Pfam" id="PF01791">
    <property type="entry name" value="DeoC"/>
    <property type="match status" value="1"/>
</dbReference>
<dbReference type="PIRSF" id="PIRSF001357">
    <property type="entry name" value="DeoC"/>
    <property type="match status" value="1"/>
</dbReference>
<dbReference type="SMART" id="SM01133">
    <property type="entry name" value="DeoC"/>
    <property type="match status" value="1"/>
</dbReference>
<dbReference type="SUPFAM" id="SSF51569">
    <property type="entry name" value="Aldolase"/>
    <property type="match status" value="1"/>
</dbReference>
<keyword id="KW-0963">Cytoplasm</keyword>
<keyword id="KW-0456">Lyase</keyword>
<keyword id="KW-1185">Reference proteome</keyword>
<keyword id="KW-0704">Schiff base</keyword>
<protein>
    <recommendedName>
        <fullName evidence="1">Deoxyribose-phosphate aldolase</fullName>
        <shortName evidence="1">DERA</shortName>
        <ecNumber evidence="1">4.1.2.4</ecNumber>
    </recommendedName>
    <alternativeName>
        <fullName evidence="1">2-deoxy-D-ribose 5-phosphate aldolase</fullName>
    </alternativeName>
    <alternativeName>
        <fullName evidence="1">Phosphodeoxyriboaldolase</fullName>
        <shortName evidence="1">Deoxyriboaldolase</shortName>
    </alternativeName>
</protein>
<gene>
    <name evidence="1" type="primary">deoC</name>
    <name type="ordered locus">EF_0174</name>
</gene>
<organism>
    <name type="scientific">Enterococcus faecalis (strain ATCC 700802 / V583)</name>
    <dbReference type="NCBI Taxonomy" id="226185"/>
    <lineage>
        <taxon>Bacteria</taxon>
        <taxon>Bacillati</taxon>
        <taxon>Bacillota</taxon>
        <taxon>Bacilli</taxon>
        <taxon>Lactobacillales</taxon>
        <taxon>Enterococcaceae</taxon>
        <taxon>Enterococcus</taxon>
    </lineage>
</organism>